<accession>Q4URK1</accession>
<name>LPXH_XANC8</name>
<gene>
    <name evidence="1" type="primary">lpxH</name>
    <name type="ordered locus">XC_3278</name>
</gene>
<proteinExistence type="inferred from homology"/>
<protein>
    <recommendedName>
        <fullName evidence="1">UDP-2,3-diacylglucosamine hydrolase</fullName>
        <ecNumber evidence="1">3.6.1.54</ecNumber>
    </recommendedName>
    <alternativeName>
        <fullName evidence="1">UDP-2,3-diacylglucosamine diphosphatase</fullName>
    </alternativeName>
</protein>
<reference key="1">
    <citation type="journal article" date="2005" name="Genome Res.">
        <title>Comparative and functional genomic analyses of the pathogenicity of phytopathogen Xanthomonas campestris pv. campestris.</title>
        <authorList>
            <person name="Qian W."/>
            <person name="Jia Y."/>
            <person name="Ren S.-X."/>
            <person name="He Y.-Q."/>
            <person name="Feng J.-X."/>
            <person name="Lu L.-F."/>
            <person name="Sun Q."/>
            <person name="Ying G."/>
            <person name="Tang D.-J."/>
            <person name="Tang H."/>
            <person name="Wu W."/>
            <person name="Hao P."/>
            <person name="Wang L."/>
            <person name="Jiang B.-L."/>
            <person name="Zeng S."/>
            <person name="Gu W.-Y."/>
            <person name="Lu G."/>
            <person name="Rong L."/>
            <person name="Tian Y."/>
            <person name="Yao Z."/>
            <person name="Fu G."/>
            <person name="Chen B."/>
            <person name="Fang R."/>
            <person name="Qiang B."/>
            <person name="Chen Z."/>
            <person name="Zhao G.-P."/>
            <person name="Tang J.-L."/>
            <person name="He C."/>
        </authorList>
    </citation>
    <scope>NUCLEOTIDE SEQUENCE [LARGE SCALE GENOMIC DNA]</scope>
    <source>
        <strain>8004</strain>
    </source>
</reference>
<organism>
    <name type="scientific">Xanthomonas campestris pv. campestris (strain 8004)</name>
    <dbReference type="NCBI Taxonomy" id="314565"/>
    <lineage>
        <taxon>Bacteria</taxon>
        <taxon>Pseudomonadati</taxon>
        <taxon>Pseudomonadota</taxon>
        <taxon>Gammaproteobacteria</taxon>
        <taxon>Lysobacterales</taxon>
        <taxon>Lysobacteraceae</taxon>
        <taxon>Xanthomonas</taxon>
    </lineage>
</organism>
<comment type="function">
    <text evidence="1">Hydrolyzes the pyrophosphate bond of UDP-2,3-diacylglucosamine to yield 2,3-diacylglucosamine 1-phosphate (lipid X) and UMP by catalyzing the attack of water at the alpha-P atom. Involved in the biosynthesis of lipid A, a phosphorylated glycolipid that anchors the lipopolysaccharide to the outer membrane of the cell.</text>
</comment>
<comment type="catalytic activity">
    <reaction evidence="1">
        <text>UDP-2-N,3-O-bis[(3R)-3-hydroxytetradecanoyl]-alpha-D-glucosamine + H2O = 2-N,3-O-bis[(3R)-3-hydroxytetradecanoyl]-alpha-D-glucosaminyl 1-phosphate + UMP + 2 H(+)</text>
        <dbReference type="Rhea" id="RHEA:25213"/>
        <dbReference type="ChEBI" id="CHEBI:15377"/>
        <dbReference type="ChEBI" id="CHEBI:15378"/>
        <dbReference type="ChEBI" id="CHEBI:57865"/>
        <dbReference type="ChEBI" id="CHEBI:57957"/>
        <dbReference type="ChEBI" id="CHEBI:78847"/>
        <dbReference type="EC" id="3.6.1.54"/>
    </reaction>
</comment>
<comment type="cofactor">
    <cofactor evidence="1">
        <name>Mn(2+)</name>
        <dbReference type="ChEBI" id="CHEBI:29035"/>
    </cofactor>
    <text evidence="1">Binds 2 Mn(2+) ions per subunit in a binuclear metal center.</text>
</comment>
<comment type="pathway">
    <text evidence="1">Glycolipid biosynthesis; lipid IV(A) biosynthesis; lipid IV(A) from (3R)-3-hydroxytetradecanoyl-[acyl-carrier-protein] and UDP-N-acetyl-alpha-D-glucosamine: step 4/6.</text>
</comment>
<comment type="subcellular location">
    <subcellularLocation>
        <location evidence="1">Cell inner membrane</location>
        <topology evidence="1">Peripheral membrane protein</topology>
        <orientation evidence="1">Cytoplasmic side</orientation>
    </subcellularLocation>
</comment>
<comment type="similarity">
    <text evidence="1">Belongs to the LpxH family.</text>
</comment>
<feature type="chain" id="PRO_1000025096" description="UDP-2,3-diacylglucosamine hydrolase">
    <location>
        <begin position="1"/>
        <end position="247"/>
    </location>
</feature>
<feature type="binding site" evidence="1">
    <location>
        <position position="8"/>
    </location>
    <ligand>
        <name>Mn(2+)</name>
        <dbReference type="ChEBI" id="CHEBI:29035"/>
        <label>1</label>
    </ligand>
</feature>
<feature type="binding site" evidence="1">
    <location>
        <position position="10"/>
    </location>
    <ligand>
        <name>Mn(2+)</name>
        <dbReference type="ChEBI" id="CHEBI:29035"/>
        <label>1</label>
    </ligand>
</feature>
<feature type="binding site" evidence="1">
    <location>
        <position position="41"/>
    </location>
    <ligand>
        <name>Mn(2+)</name>
        <dbReference type="ChEBI" id="CHEBI:29035"/>
        <label>1</label>
    </ligand>
</feature>
<feature type="binding site" evidence="1">
    <location>
        <position position="41"/>
    </location>
    <ligand>
        <name>Mn(2+)</name>
        <dbReference type="ChEBI" id="CHEBI:29035"/>
        <label>2</label>
    </ligand>
</feature>
<feature type="binding site" evidence="1">
    <location>
        <begin position="79"/>
        <end position="80"/>
    </location>
    <ligand>
        <name>substrate</name>
    </ligand>
</feature>
<feature type="binding site" evidence="1">
    <location>
        <position position="79"/>
    </location>
    <ligand>
        <name>Mn(2+)</name>
        <dbReference type="ChEBI" id="CHEBI:29035"/>
        <label>2</label>
    </ligand>
</feature>
<feature type="binding site" evidence="1">
    <location>
        <position position="114"/>
    </location>
    <ligand>
        <name>Mn(2+)</name>
        <dbReference type="ChEBI" id="CHEBI:29035"/>
        <label>2</label>
    </ligand>
</feature>
<feature type="binding site" evidence="1">
    <location>
        <position position="122"/>
    </location>
    <ligand>
        <name>substrate</name>
    </ligand>
</feature>
<feature type="binding site" evidence="1">
    <location>
        <position position="160"/>
    </location>
    <ligand>
        <name>substrate</name>
    </ligand>
</feature>
<feature type="binding site" evidence="1">
    <location>
        <position position="171"/>
    </location>
    <ligand>
        <name>substrate</name>
    </ligand>
</feature>
<feature type="binding site" evidence="1">
    <location>
        <position position="174"/>
    </location>
    <ligand>
        <name>substrate</name>
    </ligand>
</feature>
<feature type="binding site" evidence="1">
    <location>
        <position position="202"/>
    </location>
    <ligand>
        <name>Mn(2+)</name>
        <dbReference type="ChEBI" id="CHEBI:29035"/>
        <label>2</label>
    </ligand>
</feature>
<feature type="binding site" evidence="1">
    <location>
        <position position="202"/>
    </location>
    <ligand>
        <name>substrate</name>
    </ligand>
</feature>
<feature type="binding site" evidence="1">
    <location>
        <position position="204"/>
    </location>
    <ligand>
        <name>Mn(2+)</name>
        <dbReference type="ChEBI" id="CHEBI:29035"/>
        <label>1</label>
    </ligand>
</feature>
<evidence type="ECO:0000255" key="1">
    <source>
        <dbReference type="HAMAP-Rule" id="MF_00575"/>
    </source>
</evidence>
<dbReference type="EC" id="3.6.1.54" evidence="1"/>
<dbReference type="EMBL" id="CP000050">
    <property type="protein sequence ID" value="AAY50322.1"/>
    <property type="molecule type" value="Genomic_DNA"/>
</dbReference>
<dbReference type="RefSeq" id="WP_011036171.1">
    <property type="nucleotide sequence ID" value="NZ_CP155948.1"/>
</dbReference>
<dbReference type="SMR" id="Q4URK1"/>
<dbReference type="KEGG" id="xcb:XC_3278"/>
<dbReference type="HOGENOM" id="CLU_074586_0_0_6"/>
<dbReference type="UniPathway" id="UPA00359">
    <property type="reaction ID" value="UER00480"/>
</dbReference>
<dbReference type="Proteomes" id="UP000000420">
    <property type="component" value="Chromosome"/>
</dbReference>
<dbReference type="GO" id="GO:0005737">
    <property type="term" value="C:cytoplasm"/>
    <property type="evidence" value="ECO:0007669"/>
    <property type="project" value="InterPro"/>
</dbReference>
<dbReference type="GO" id="GO:0019897">
    <property type="term" value="C:extrinsic component of plasma membrane"/>
    <property type="evidence" value="ECO:0007669"/>
    <property type="project" value="UniProtKB-UniRule"/>
</dbReference>
<dbReference type="GO" id="GO:0030145">
    <property type="term" value="F:manganese ion binding"/>
    <property type="evidence" value="ECO:0007669"/>
    <property type="project" value="UniProtKB-UniRule"/>
</dbReference>
<dbReference type="GO" id="GO:0008758">
    <property type="term" value="F:UDP-2,3-diacylglucosamine hydrolase activity"/>
    <property type="evidence" value="ECO:0007669"/>
    <property type="project" value="UniProtKB-UniRule"/>
</dbReference>
<dbReference type="GO" id="GO:0009245">
    <property type="term" value="P:lipid A biosynthetic process"/>
    <property type="evidence" value="ECO:0007669"/>
    <property type="project" value="UniProtKB-UniRule"/>
</dbReference>
<dbReference type="CDD" id="cd07398">
    <property type="entry name" value="MPP_YbbF-LpxH"/>
    <property type="match status" value="1"/>
</dbReference>
<dbReference type="Gene3D" id="3.60.21.10">
    <property type="match status" value="1"/>
</dbReference>
<dbReference type="HAMAP" id="MF_00575">
    <property type="entry name" value="LpxH"/>
    <property type="match status" value="1"/>
</dbReference>
<dbReference type="InterPro" id="IPR004843">
    <property type="entry name" value="Calcineurin-like_PHP_ApaH"/>
</dbReference>
<dbReference type="InterPro" id="IPR043461">
    <property type="entry name" value="LpxH-like"/>
</dbReference>
<dbReference type="InterPro" id="IPR029052">
    <property type="entry name" value="Metallo-depent_PP-like"/>
</dbReference>
<dbReference type="InterPro" id="IPR010138">
    <property type="entry name" value="UDP-diacylglucosamine_Hdrlase"/>
</dbReference>
<dbReference type="NCBIfam" id="TIGR01854">
    <property type="entry name" value="lipid_A_lpxH"/>
    <property type="match status" value="1"/>
</dbReference>
<dbReference type="NCBIfam" id="NF003743">
    <property type="entry name" value="PRK05340.1"/>
    <property type="match status" value="1"/>
</dbReference>
<dbReference type="PANTHER" id="PTHR34990:SF1">
    <property type="entry name" value="UDP-2,3-DIACYLGLUCOSAMINE HYDROLASE"/>
    <property type="match status" value="1"/>
</dbReference>
<dbReference type="PANTHER" id="PTHR34990">
    <property type="entry name" value="UDP-2,3-DIACYLGLUCOSAMINE HYDROLASE-RELATED"/>
    <property type="match status" value="1"/>
</dbReference>
<dbReference type="Pfam" id="PF00149">
    <property type="entry name" value="Metallophos"/>
    <property type="match status" value="1"/>
</dbReference>
<dbReference type="SUPFAM" id="SSF56300">
    <property type="entry name" value="Metallo-dependent phosphatases"/>
    <property type="match status" value="1"/>
</dbReference>
<sequence>MTTLFISDLHLDPARPAITELFLDFLRTQVPGSDALYILGDLFEAWIGDDTPSTAADAVAEALHAVATTGVPVFFMPGNRDFLVGAAYAQRAGFRILPDPTVIDLYGQPTLLMHGDLLCTDDTAYQAFRAQTRDPAFQAQFLSQPLAARVAFAQQARAASHARQSELKQGDQAQFETVTDVAPAEVDATFVRYGLDRIIHGHTHRPAIHTVQAGGRTCTRVVLGDWYEQGSVLRVDADGLALEQLAL</sequence>
<keyword id="KW-0997">Cell inner membrane</keyword>
<keyword id="KW-1003">Cell membrane</keyword>
<keyword id="KW-0378">Hydrolase</keyword>
<keyword id="KW-0441">Lipid A biosynthesis</keyword>
<keyword id="KW-0444">Lipid biosynthesis</keyword>
<keyword id="KW-0443">Lipid metabolism</keyword>
<keyword id="KW-0464">Manganese</keyword>
<keyword id="KW-0472">Membrane</keyword>
<keyword id="KW-0479">Metal-binding</keyword>